<evidence type="ECO:0000255" key="1">
    <source>
        <dbReference type="HAMAP-Rule" id="MF_00503"/>
    </source>
</evidence>
<evidence type="ECO:0000305" key="2"/>
<name>RL9_MYCMM</name>
<proteinExistence type="inferred from homology"/>
<sequence>MKLILTADVDHLGSVGDTVEVKDGYGRNFLLPRGMAIVASRGAQKQADEIRRSRETKAVRDREHANEIKTAIQALGSVALPVKTAADSGKLFGSVTAGDVVAAIKKAGGPNLDKRIVRLPKAHIKAVGTHPVVMHLHPEIEVELSVDVVAES</sequence>
<comment type="function">
    <text evidence="1">Binds to the 23S rRNA.</text>
</comment>
<comment type="similarity">
    <text evidence="1">Belongs to the bacterial ribosomal protein bL9 family.</text>
</comment>
<protein>
    <recommendedName>
        <fullName evidence="1">Large ribosomal subunit protein bL9</fullName>
    </recommendedName>
    <alternativeName>
        <fullName evidence="2">50S ribosomal protein L9</fullName>
    </alternativeName>
</protein>
<dbReference type="EMBL" id="CP000854">
    <property type="protein sequence ID" value="ACC38546.1"/>
    <property type="molecule type" value="Genomic_DNA"/>
</dbReference>
<dbReference type="RefSeq" id="WP_012392078.1">
    <property type="nucleotide sequence ID" value="NC_010612.1"/>
</dbReference>
<dbReference type="SMR" id="B2HIC0"/>
<dbReference type="STRING" id="216594.MMAR_0075"/>
<dbReference type="KEGG" id="mmi:MMAR_0075"/>
<dbReference type="eggNOG" id="COG0359">
    <property type="taxonomic scope" value="Bacteria"/>
</dbReference>
<dbReference type="HOGENOM" id="CLU_078938_5_1_11"/>
<dbReference type="OrthoDB" id="9788336at2"/>
<dbReference type="Proteomes" id="UP000001190">
    <property type="component" value="Chromosome"/>
</dbReference>
<dbReference type="GO" id="GO:1990904">
    <property type="term" value="C:ribonucleoprotein complex"/>
    <property type="evidence" value="ECO:0007669"/>
    <property type="project" value="UniProtKB-KW"/>
</dbReference>
<dbReference type="GO" id="GO:0005840">
    <property type="term" value="C:ribosome"/>
    <property type="evidence" value="ECO:0007669"/>
    <property type="project" value="UniProtKB-KW"/>
</dbReference>
<dbReference type="GO" id="GO:0019843">
    <property type="term" value="F:rRNA binding"/>
    <property type="evidence" value="ECO:0007669"/>
    <property type="project" value="UniProtKB-UniRule"/>
</dbReference>
<dbReference type="GO" id="GO:0003735">
    <property type="term" value="F:structural constituent of ribosome"/>
    <property type="evidence" value="ECO:0007669"/>
    <property type="project" value="InterPro"/>
</dbReference>
<dbReference type="GO" id="GO:0006412">
    <property type="term" value="P:translation"/>
    <property type="evidence" value="ECO:0007669"/>
    <property type="project" value="UniProtKB-UniRule"/>
</dbReference>
<dbReference type="FunFam" id="3.10.430.100:FF:000006">
    <property type="entry name" value="50S ribosomal protein L9"/>
    <property type="match status" value="1"/>
</dbReference>
<dbReference type="FunFam" id="3.40.5.10:FF:000003">
    <property type="entry name" value="50S ribosomal protein L9"/>
    <property type="match status" value="1"/>
</dbReference>
<dbReference type="Gene3D" id="3.10.430.100">
    <property type="entry name" value="Ribosomal protein L9, C-terminal domain"/>
    <property type="match status" value="1"/>
</dbReference>
<dbReference type="Gene3D" id="3.40.5.10">
    <property type="entry name" value="Ribosomal protein L9, N-terminal domain"/>
    <property type="match status" value="1"/>
</dbReference>
<dbReference type="HAMAP" id="MF_00503">
    <property type="entry name" value="Ribosomal_bL9"/>
    <property type="match status" value="1"/>
</dbReference>
<dbReference type="InterPro" id="IPR000244">
    <property type="entry name" value="Ribosomal_bL9"/>
</dbReference>
<dbReference type="InterPro" id="IPR009027">
    <property type="entry name" value="Ribosomal_bL9/RNase_H1_N"/>
</dbReference>
<dbReference type="InterPro" id="IPR020594">
    <property type="entry name" value="Ribosomal_bL9_bac/chp"/>
</dbReference>
<dbReference type="InterPro" id="IPR020069">
    <property type="entry name" value="Ribosomal_bL9_C"/>
</dbReference>
<dbReference type="InterPro" id="IPR036791">
    <property type="entry name" value="Ribosomal_bL9_C_sf"/>
</dbReference>
<dbReference type="InterPro" id="IPR020070">
    <property type="entry name" value="Ribosomal_bL9_N"/>
</dbReference>
<dbReference type="InterPro" id="IPR036935">
    <property type="entry name" value="Ribosomal_bL9_N_sf"/>
</dbReference>
<dbReference type="NCBIfam" id="TIGR00158">
    <property type="entry name" value="L9"/>
    <property type="match status" value="1"/>
</dbReference>
<dbReference type="PANTHER" id="PTHR21368">
    <property type="entry name" value="50S RIBOSOMAL PROTEIN L9"/>
    <property type="match status" value="1"/>
</dbReference>
<dbReference type="Pfam" id="PF03948">
    <property type="entry name" value="Ribosomal_L9_C"/>
    <property type="match status" value="1"/>
</dbReference>
<dbReference type="Pfam" id="PF01281">
    <property type="entry name" value="Ribosomal_L9_N"/>
    <property type="match status" value="1"/>
</dbReference>
<dbReference type="SUPFAM" id="SSF55658">
    <property type="entry name" value="L9 N-domain-like"/>
    <property type="match status" value="1"/>
</dbReference>
<dbReference type="SUPFAM" id="SSF55653">
    <property type="entry name" value="Ribosomal protein L9 C-domain"/>
    <property type="match status" value="1"/>
</dbReference>
<dbReference type="PROSITE" id="PS00651">
    <property type="entry name" value="RIBOSOMAL_L9"/>
    <property type="match status" value="1"/>
</dbReference>
<gene>
    <name evidence="1" type="primary">rplI</name>
    <name type="ordered locus">MMAR_0075</name>
</gene>
<organism>
    <name type="scientific">Mycobacterium marinum (strain ATCC BAA-535 / M)</name>
    <dbReference type="NCBI Taxonomy" id="216594"/>
    <lineage>
        <taxon>Bacteria</taxon>
        <taxon>Bacillati</taxon>
        <taxon>Actinomycetota</taxon>
        <taxon>Actinomycetes</taxon>
        <taxon>Mycobacteriales</taxon>
        <taxon>Mycobacteriaceae</taxon>
        <taxon>Mycobacterium</taxon>
        <taxon>Mycobacterium ulcerans group</taxon>
    </lineage>
</organism>
<accession>B2HIC0</accession>
<feature type="chain" id="PRO_1000126943" description="Large ribosomal subunit protein bL9">
    <location>
        <begin position="1"/>
        <end position="152"/>
    </location>
</feature>
<keyword id="KW-1185">Reference proteome</keyword>
<keyword id="KW-0687">Ribonucleoprotein</keyword>
<keyword id="KW-0689">Ribosomal protein</keyword>
<keyword id="KW-0694">RNA-binding</keyword>
<keyword id="KW-0699">rRNA-binding</keyword>
<reference key="1">
    <citation type="journal article" date="2008" name="Genome Res.">
        <title>Insights from the complete genome sequence of Mycobacterium marinum on the evolution of Mycobacterium tuberculosis.</title>
        <authorList>
            <person name="Stinear T.P."/>
            <person name="Seemann T."/>
            <person name="Harrison P.F."/>
            <person name="Jenkin G.A."/>
            <person name="Davies J.K."/>
            <person name="Johnson P.D."/>
            <person name="Abdellah Z."/>
            <person name="Arrowsmith C."/>
            <person name="Chillingworth T."/>
            <person name="Churcher C."/>
            <person name="Clarke K."/>
            <person name="Cronin A."/>
            <person name="Davis P."/>
            <person name="Goodhead I."/>
            <person name="Holroyd N."/>
            <person name="Jagels K."/>
            <person name="Lord A."/>
            <person name="Moule S."/>
            <person name="Mungall K."/>
            <person name="Norbertczak H."/>
            <person name="Quail M.A."/>
            <person name="Rabbinowitsch E."/>
            <person name="Walker D."/>
            <person name="White B."/>
            <person name="Whitehead S."/>
            <person name="Small P.L."/>
            <person name="Brosch R."/>
            <person name="Ramakrishnan L."/>
            <person name="Fischbach M.A."/>
            <person name="Parkhill J."/>
            <person name="Cole S.T."/>
        </authorList>
    </citation>
    <scope>NUCLEOTIDE SEQUENCE [LARGE SCALE GENOMIC DNA]</scope>
    <source>
        <strain>ATCC BAA-535 / M</strain>
    </source>
</reference>